<accession>B3R068</accession>
<protein>
    <recommendedName>
        <fullName evidence="1">Recombination protein RecR</fullName>
    </recommendedName>
</protein>
<comment type="function">
    <text evidence="1">May play a role in DNA repair. It seems to be involved in an RecBC-independent recombinational process of DNA repair. It may act with RecF and RecO.</text>
</comment>
<comment type="similarity">
    <text evidence="1">Belongs to the RecR family.</text>
</comment>
<sequence length="206" mass="23804">MKNSPTVEKLIESFTLLPGVGKKTAERYTFFLINQKNKNKILYLSKHLKELVNNIKSCNICGYITEKNICNFCSDSQRDHSTIMIVADNRDVYCFEKINHYHGLYHILGGLIDFSRCIKPENLNFNSLKDRLKTIKEIIIATNSTLEGEITATYSKKFLKKYLKDEKIKITKLAYGIPIGLDFNYLDEKTLCNAINNRNNFKGENE</sequence>
<proteinExistence type="inferred from homology"/>
<reference key="1">
    <citation type="journal article" date="2008" name="BMC Genomics">
        <title>The linear chromosome of the plant-pathogenic mycoplasma 'Candidatus Phytoplasma mali'.</title>
        <authorList>
            <person name="Kube M."/>
            <person name="Schneider B."/>
            <person name="Kuhl H."/>
            <person name="Dandekar T."/>
            <person name="Heitmann K."/>
            <person name="Migdoll A.M."/>
            <person name="Reinhardt R."/>
            <person name="Seemueller E."/>
        </authorList>
    </citation>
    <scope>NUCLEOTIDE SEQUENCE [LARGE SCALE GENOMIC DNA]</scope>
    <source>
        <strain>AT</strain>
    </source>
</reference>
<gene>
    <name evidence="1" type="primary">recR</name>
    <name type="ordered locus">ATP_00045</name>
</gene>
<keyword id="KW-0227">DNA damage</keyword>
<keyword id="KW-0233">DNA recombination</keyword>
<keyword id="KW-0234">DNA repair</keyword>
<keyword id="KW-0479">Metal-binding</keyword>
<keyword id="KW-1185">Reference proteome</keyword>
<keyword id="KW-0862">Zinc</keyword>
<keyword id="KW-0863">Zinc-finger</keyword>
<evidence type="ECO:0000255" key="1">
    <source>
        <dbReference type="HAMAP-Rule" id="MF_00017"/>
    </source>
</evidence>
<organism>
    <name type="scientific">Phytoplasma mali (strain AT)</name>
    <dbReference type="NCBI Taxonomy" id="482235"/>
    <lineage>
        <taxon>Bacteria</taxon>
        <taxon>Bacillati</taxon>
        <taxon>Mycoplasmatota</taxon>
        <taxon>Mollicutes</taxon>
        <taxon>Acholeplasmatales</taxon>
        <taxon>Acholeplasmataceae</taxon>
        <taxon>Candidatus Phytoplasma</taxon>
        <taxon>16SrX (Apple proliferation group)</taxon>
    </lineage>
</organism>
<dbReference type="EMBL" id="CU469464">
    <property type="protein sequence ID" value="CAP18232.1"/>
    <property type="molecule type" value="Genomic_DNA"/>
</dbReference>
<dbReference type="SMR" id="B3R068"/>
<dbReference type="STRING" id="37692.ATP_00045"/>
<dbReference type="KEGG" id="pml:ATP_00045"/>
<dbReference type="eggNOG" id="COG0353">
    <property type="taxonomic scope" value="Bacteria"/>
</dbReference>
<dbReference type="HOGENOM" id="CLU_060739_1_1_14"/>
<dbReference type="Proteomes" id="UP000002020">
    <property type="component" value="Chromosome"/>
</dbReference>
<dbReference type="GO" id="GO:0003677">
    <property type="term" value="F:DNA binding"/>
    <property type="evidence" value="ECO:0007669"/>
    <property type="project" value="UniProtKB-UniRule"/>
</dbReference>
<dbReference type="GO" id="GO:0008270">
    <property type="term" value="F:zinc ion binding"/>
    <property type="evidence" value="ECO:0007669"/>
    <property type="project" value="UniProtKB-KW"/>
</dbReference>
<dbReference type="GO" id="GO:0006310">
    <property type="term" value="P:DNA recombination"/>
    <property type="evidence" value="ECO:0007669"/>
    <property type="project" value="UniProtKB-UniRule"/>
</dbReference>
<dbReference type="GO" id="GO:0006281">
    <property type="term" value="P:DNA repair"/>
    <property type="evidence" value="ECO:0007669"/>
    <property type="project" value="UniProtKB-UniRule"/>
</dbReference>
<dbReference type="CDD" id="cd01025">
    <property type="entry name" value="TOPRIM_recR"/>
    <property type="match status" value="1"/>
</dbReference>
<dbReference type="Gene3D" id="3.40.1360.10">
    <property type="match status" value="1"/>
</dbReference>
<dbReference type="Gene3D" id="6.10.250.240">
    <property type="match status" value="1"/>
</dbReference>
<dbReference type="Gene3D" id="1.10.8.420">
    <property type="entry name" value="RecR Domain 1"/>
    <property type="match status" value="1"/>
</dbReference>
<dbReference type="HAMAP" id="MF_00017">
    <property type="entry name" value="RecR"/>
    <property type="match status" value="1"/>
</dbReference>
<dbReference type="InterPro" id="IPR000093">
    <property type="entry name" value="DNA_Rcmb_RecR"/>
</dbReference>
<dbReference type="InterPro" id="IPR023627">
    <property type="entry name" value="Rcmb_RecR"/>
</dbReference>
<dbReference type="InterPro" id="IPR015967">
    <property type="entry name" value="Rcmb_RecR_Znf"/>
</dbReference>
<dbReference type="InterPro" id="IPR006171">
    <property type="entry name" value="TOPRIM_dom"/>
</dbReference>
<dbReference type="InterPro" id="IPR034137">
    <property type="entry name" value="TOPRIM_RecR"/>
</dbReference>
<dbReference type="NCBIfam" id="TIGR00615">
    <property type="entry name" value="recR"/>
    <property type="match status" value="1"/>
</dbReference>
<dbReference type="PANTHER" id="PTHR30446">
    <property type="entry name" value="RECOMBINATION PROTEIN RECR"/>
    <property type="match status" value="1"/>
</dbReference>
<dbReference type="PANTHER" id="PTHR30446:SF0">
    <property type="entry name" value="RECOMBINATION PROTEIN RECR"/>
    <property type="match status" value="1"/>
</dbReference>
<dbReference type="Pfam" id="PF21176">
    <property type="entry name" value="RecR_HhH"/>
    <property type="match status" value="1"/>
</dbReference>
<dbReference type="Pfam" id="PF13662">
    <property type="entry name" value="Toprim_4"/>
    <property type="match status" value="1"/>
</dbReference>
<dbReference type="SMART" id="SM00493">
    <property type="entry name" value="TOPRIM"/>
    <property type="match status" value="1"/>
</dbReference>
<dbReference type="SUPFAM" id="SSF111304">
    <property type="entry name" value="Recombination protein RecR"/>
    <property type="match status" value="1"/>
</dbReference>
<dbReference type="PROSITE" id="PS01300">
    <property type="entry name" value="RECR"/>
    <property type="match status" value="1"/>
</dbReference>
<dbReference type="PROSITE" id="PS50880">
    <property type="entry name" value="TOPRIM"/>
    <property type="match status" value="1"/>
</dbReference>
<name>RECR_PHYMT</name>
<feature type="chain" id="PRO_1000195402" description="Recombination protein RecR">
    <location>
        <begin position="1"/>
        <end position="206"/>
    </location>
</feature>
<feature type="domain" description="Toprim" evidence="1">
    <location>
        <begin position="81"/>
        <end position="178"/>
    </location>
</feature>
<feature type="zinc finger region" description="C4-type" evidence="1">
    <location>
        <begin position="58"/>
        <end position="73"/>
    </location>
</feature>